<gene>
    <name evidence="1" type="primary">rplC</name>
    <name type="ordered locus">A2cp1_1975</name>
</gene>
<organism>
    <name type="scientific">Anaeromyxobacter dehalogenans (strain 2CP-1 / ATCC BAA-258)</name>
    <dbReference type="NCBI Taxonomy" id="455488"/>
    <lineage>
        <taxon>Bacteria</taxon>
        <taxon>Pseudomonadati</taxon>
        <taxon>Myxococcota</taxon>
        <taxon>Myxococcia</taxon>
        <taxon>Myxococcales</taxon>
        <taxon>Cystobacterineae</taxon>
        <taxon>Anaeromyxobacteraceae</taxon>
        <taxon>Anaeromyxobacter</taxon>
    </lineage>
</organism>
<sequence>MSTGLLAKKVGMTQIFTPEGDCVPVTVLEAGPCTVVRRKTAEKDGYDAVVIGFGVVDEKHAHRLSKPEVGVFKKAGTPIFRHVKEIRVKDAKQLGDLKAGDVLTVDKVFKANQRIDVAGVTKGRGFTGVMKRWNMKGAARDSSTAHEHHRHVGAIGQRKTPGKVWKGKHLPGHYGVDNVTIQNLTVVGIEAEQNVLLVSGAVPGHADGLLFVNTAAKGQPRIKQKQEVRERAKPKV</sequence>
<name>RL3_ANAD2</name>
<dbReference type="EMBL" id="CP001359">
    <property type="protein sequence ID" value="ACL65316.1"/>
    <property type="molecule type" value="Genomic_DNA"/>
</dbReference>
<dbReference type="RefSeq" id="WP_012525932.1">
    <property type="nucleotide sequence ID" value="NC_011891.1"/>
</dbReference>
<dbReference type="SMR" id="B8J817"/>
<dbReference type="KEGG" id="acp:A2cp1_1975"/>
<dbReference type="HOGENOM" id="CLU_044142_4_1_7"/>
<dbReference type="Proteomes" id="UP000007089">
    <property type="component" value="Chromosome"/>
</dbReference>
<dbReference type="GO" id="GO:0022625">
    <property type="term" value="C:cytosolic large ribosomal subunit"/>
    <property type="evidence" value="ECO:0007669"/>
    <property type="project" value="TreeGrafter"/>
</dbReference>
<dbReference type="GO" id="GO:0019843">
    <property type="term" value="F:rRNA binding"/>
    <property type="evidence" value="ECO:0007669"/>
    <property type="project" value="UniProtKB-UniRule"/>
</dbReference>
<dbReference type="GO" id="GO:0003735">
    <property type="term" value="F:structural constituent of ribosome"/>
    <property type="evidence" value="ECO:0007669"/>
    <property type="project" value="InterPro"/>
</dbReference>
<dbReference type="GO" id="GO:0006412">
    <property type="term" value="P:translation"/>
    <property type="evidence" value="ECO:0007669"/>
    <property type="project" value="UniProtKB-UniRule"/>
</dbReference>
<dbReference type="FunFam" id="2.40.30.10:FF:000004">
    <property type="entry name" value="50S ribosomal protein L3"/>
    <property type="match status" value="1"/>
</dbReference>
<dbReference type="FunFam" id="3.30.160.810:FF:000001">
    <property type="entry name" value="50S ribosomal protein L3"/>
    <property type="match status" value="1"/>
</dbReference>
<dbReference type="Gene3D" id="3.30.160.810">
    <property type="match status" value="1"/>
</dbReference>
<dbReference type="Gene3D" id="2.40.30.10">
    <property type="entry name" value="Translation factors"/>
    <property type="match status" value="1"/>
</dbReference>
<dbReference type="HAMAP" id="MF_01325_B">
    <property type="entry name" value="Ribosomal_uL3_B"/>
    <property type="match status" value="1"/>
</dbReference>
<dbReference type="InterPro" id="IPR000597">
    <property type="entry name" value="Ribosomal_uL3"/>
</dbReference>
<dbReference type="InterPro" id="IPR019927">
    <property type="entry name" value="Ribosomal_uL3_bac/org-type"/>
</dbReference>
<dbReference type="InterPro" id="IPR019926">
    <property type="entry name" value="Ribosomal_uL3_CS"/>
</dbReference>
<dbReference type="InterPro" id="IPR009000">
    <property type="entry name" value="Transl_B-barrel_sf"/>
</dbReference>
<dbReference type="NCBIfam" id="TIGR03625">
    <property type="entry name" value="L3_bact"/>
    <property type="match status" value="1"/>
</dbReference>
<dbReference type="PANTHER" id="PTHR11229">
    <property type="entry name" value="50S RIBOSOMAL PROTEIN L3"/>
    <property type="match status" value="1"/>
</dbReference>
<dbReference type="PANTHER" id="PTHR11229:SF16">
    <property type="entry name" value="LARGE RIBOSOMAL SUBUNIT PROTEIN UL3C"/>
    <property type="match status" value="1"/>
</dbReference>
<dbReference type="Pfam" id="PF00297">
    <property type="entry name" value="Ribosomal_L3"/>
    <property type="match status" value="1"/>
</dbReference>
<dbReference type="SUPFAM" id="SSF50447">
    <property type="entry name" value="Translation proteins"/>
    <property type="match status" value="1"/>
</dbReference>
<dbReference type="PROSITE" id="PS00474">
    <property type="entry name" value="RIBOSOMAL_L3"/>
    <property type="match status" value="1"/>
</dbReference>
<evidence type="ECO:0000255" key="1">
    <source>
        <dbReference type="HAMAP-Rule" id="MF_01325"/>
    </source>
</evidence>
<evidence type="ECO:0000305" key="2"/>
<comment type="function">
    <text evidence="1">One of the primary rRNA binding proteins, it binds directly near the 3'-end of the 23S rRNA, where it nucleates assembly of the 50S subunit.</text>
</comment>
<comment type="subunit">
    <text evidence="1">Part of the 50S ribosomal subunit. Forms a cluster with proteins L14 and L19.</text>
</comment>
<comment type="similarity">
    <text evidence="1">Belongs to the universal ribosomal protein uL3 family.</text>
</comment>
<keyword id="KW-0687">Ribonucleoprotein</keyword>
<keyword id="KW-0689">Ribosomal protein</keyword>
<keyword id="KW-0694">RNA-binding</keyword>
<keyword id="KW-0699">rRNA-binding</keyword>
<protein>
    <recommendedName>
        <fullName evidence="1">Large ribosomal subunit protein uL3</fullName>
    </recommendedName>
    <alternativeName>
        <fullName evidence="2">50S ribosomal protein L3</fullName>
    </alternativeName>
</protein>
<reference key="1">
    <citation type="submission" date="2009-01" db="EMBL/GenBank/DDBJ databases">
        <title>Complete sequence of Anaeromyxobacter dehalogenans 2CP-1.</title>
        <authorList>
            <person name="Lucas S."/>
            <person name="Copeland A."/>
            <person name="Lapidus A."/>
            <person name="Glavina del Rio T."/>
            <person name="Dalin E."/>
            <person name="Tice H."/>
            <person name="Bruce D."/>
            <person name="Goodwin L."/>
            <person name="Pitluck S."/>
            <person name="Saunders E."/>
            <person name="Brettin T."/>
            <person name="Detter J.C."/>
            <person name="Han C."/>
            <person name="Larimer F."/>
            <person name="Land M."/>
            <person name="Hauser L."/>
            <person name="Kyrpides N."/>
            <person name="Ovchinnikova G."/>
            <person name="Beliaev A.S."/>
            <person name="Richardson P."/>
        </authorList>
    </citation>
    <scope>NUCLEOTIDE SEQUENCE [LARGE SCALE GENOMIC DNA]</scope>
    <source>
        <strain>2CP-1 / ATCC BAA-258</strain>
    </source>
</reference>
<proteinExistence type="inferred from homology"/>
<accession>B8J817</accession>
<feature type="chain" id="PRO_1000165861" description="Large ribosomal subunit protein uL3">
    <location>
        <begin position="1"/>
        <end position="236"/>
    </location>
</feature>